<comment type="catalytic activity">
    <reaction evidence="2">
        <text>L-cysteine + O2 = 3-sulfino-L-alanine + H(+)</text>
        <dbReference type="Rhea" id="RHEA:20441"/>
        <dbReference type="ChEBI" id="CHEBI:15378"/>
        <dbReference type="ChEBI" id="CHEBI:15379"/>
        <dbReference type="ChEBI" id="CHEBI:35235"/>
        <dbReference type="ChEBI" id="CHEBI:61085"/>
        <dbReference type="EC" id="1.13.11.20"/>
    </reaction>
</comment>
<comment type="cofactor">
    <cofactor evidence="1">
        <name>Fe cation</name>
        <dbReference type="ChEBI" id="CHEBI:24875"/>
    </cofactor>
    <text evidence="1">Binds 1 Fe cation per subunit.</text>
</comment>
<comment type="biophysicochemical properties">
    <kinetics>
        <KM evidence="2">3 mM for cysteine</KM>
    </kinetics>
    <phDependence>
        <text evidence="2">Optimum pH is 6.2.</text>
    </phDependence>
</comment>
<comment type="developmental stage">
    <text evidence="2">Up-regulated upon sporulation.</text>
</comment>
<comment type="miscellaneous">
    <text evidence="3">Although there are Cys and Trp residues in equivalent positions with the residues forming a thioether cross-link in the eukaryotic homologous sequences, no thioether cross-link is formed in this protein.</text>
</comment>
<comment type="similarity">
    <text evidence="4">Belongs to the cysteine dioxygenase family.</text>
</comment>
<organism>
    <name type="scientific">Bacillus subtilis (strain 168)</name>
    <dbReference type="NCBI Taxonomy" id="224308"/>
    <lineage>
        <taxon>Bacteria</taxon>
        <taxon>Bacillati</taxon>
        <taxon>Bacillota</taxon>
        <taxon>Bacilli</taxon>
        <taxon>Bacillales</taxon>
        <taxon>Bacillaceae</taxon>
        <taxon>Bacillus</taxon>
    </lineage>
</organism>
<name>CDOA_BACSU</name>
<gene>
    <name type="primary">cdoA</name>
    <name type="synonym">yubC</name>
    <name type="ordered locus">BSU31140</name>
</gene>
<evidence type="ECO:0000250" key="1"/>
<evidence type="ECO:0000269" key="2">
    <source>
    </source>
</evidence>
<evidence type="ECO:0000269" key="3">
    <source>
    </source>
</evidence>
<evidence type="ECO:0000305" key="4"/>
<evidence type="ECO:0007829" key="5">
    <source>
        <dbReference type="PDB" id="4QM8"/>
    </source>
</evidence>
<evidence type="ECO:0007829" key="6">
    <source>
        <dbReference type="PDB" id="4QM9"/>
    </source>
</evidence>
<keyword id="KW-0002">3D-structure</keyword>
<keyword id="KW-0223">Dioxygenase</keyword>
<keyword id="KW-0408">Iron</keyword>
<keyword id="KW-0479">Metal-binding</keyword>
<keyword id="KW-0560">Oxidoreductase</keyword>
<keyword id="KW-1185">Reference proteome</keyword>
<accession>O32085</accession>
<proteinExistence type="evidence at protein level"/>
<feature type="chain" id="PRO_0000360761" description="Cysteine dioxygenase">
    <location>
        <begin position="1"/>
        <end position="161"/>
    </location>
</feature>
<feature type="binding site" evidence="3">
    <location>
        <position position="75"/>
    </location>
    <ligand>
        <name>Fe cation</name>
        <dbReference type="ChEBI" id="CHEBI:24875"/>
        <note>catalytic</note>
    </ligand>
</feature>
<feature type="binding site" evidence="3">
    <location>
        <position position="77"/>
    </location>
    <ligand>
        <name>Fe cation</name>
        <dbReference type="ChEBI" id="CHEBI:24875"/>
        <note>catalytic</note>
    </ligand>
</feature>
<feature type="binding site" evidence="3">
    <location>
        <position position="125"/>
    </location>
    <ligand>
        <name>Fe cation</name>
        <dbReference type="ChEBI" id="CHEBI:24875"/>
        <note>catalytic</note>
    </ligand>
</feature>
<feature type="helix" evidence="6">
    <location>
        <begin position="3"/>
        <end position="11"/>
    </location>
</feature>
<feature type="helix" evidence="6">
    <location>
        <begin position="19"/>
        <end position="26"/>
    </location>
</feature>
<feature type="helix" evidence="6">
    <location>
        <begin position="32"/>
        <end position="36"/>
    </location>
</feature>
<feature type="helix" evidence="6">
    <location>
        <begin position="37"/>
        <end position="39"/>
    </location>
</feature>
<feature type="strand" evidence="6">
    <location>
        <begin position="44"/>
        <end position="55"/>
    </location>
</feature>
<feature type="strand" evidence="6">
    <location>
        <begin position="60"/>
        <end position="66"/>
    </location>
</feature>
<feature type="strand" evidence="5">
    <location>
        <begin position="74"/>
        <end position="76"/>
    </location>
</feature>
<feature type="strand" evidence="6">
    <location>
        <begin position="81"/>
        <end position="98"/>
    </location>
</feature>
<feature type="strand" evidence="6">
    <location>
        <begin position="100"/>
        <end position="112"/>
    </location>
</feature>
<feature type="strand" evidence="6">
    <location>
        <begin position="116"/>
        <end position="119"/>
    </location>
</feature>
<feature type="strand" evidence="6">
    <location>
        <begin position="124"/>
        <end position="128"/>
    </location>
</feature>
<feature type="strand" evidence="6">
    <location>
        <begin position="131"/>
        <end position="133"/>
    </location>
</feature>
<feature type="strand" evidence="6">
    <location>
        <begin position="135"/>
        <end position="143"/>
    </location>
</feature>
<feature type="strand" evidence="5">
    <location>
        <begin position="149"/>
        <end position="151"/>
    </location>
</feature>
<sequence length="161" mass="18127">MELYECIQDIFGGLKNPSVKDLATSLKQIPNAAKLSQPYIKEPDQYAYGRNAIYRNNELEIIVINIPPNKETTVHDHGQSIGCAMVLEGKLLNSIYRSTGEHAELSNSYFVHEGECLISTKGLIHKMSNPTSERMVSLHVYSPPLEDMTVFEEQKEVLENS</sequence>
<dbReference type="EC" id="1.13.11.20"/>
<dbReference type="EMBL" id="AL009126">
    <property type="protein sequence ID" value="CAB15092.1"/>
    <property type="molecule type" value="Genomic_DNA"/>
</dbReference>
<dbReference type="PIR" id="F70006">
    <property type="entry name" value="F70006"/>
</dbReference>
<dbReference type="RefSeq" id="NP_390992.1">
    <property type="nucleotide sequence ID" value="NC_000964.3"/>
</dbReference>
<dbReference type="RefSeq" id="WP_003243534.1">
    <property type="nucleotide sequence ID" value="NZ_OZ025638.1"/>
</dbReference>
<dbReference type="PDB" id="3EQE">
    <property type="method" value="X-ray"/>
    <property type="resolution" value="2.82 A"/>
    <property type="chains" value="A/B=1-161"/>
</dbReference>
<dbReference type="PDB" id="4QM8">
    <property type="method" value="X-ray"/>
    <property type="resolution" value="2.82 A"/>
    <property type="chains" value="A/B=1-161"/>
</dbReference>
<dbReference type="PDB" id="4QM9">
    <property type="method" value="X-ray"/>
    <property type="resolution" value="2.30 A"/>
    <property type="chains" value="A/B=1-161"/>
</dbReference>
<dbReference type="PDBsum" id="3EQE"/>
<dbReference type="PDBsum" id="4QM8"/>
<dbReference type="PDBsum" id="4QM9"/>
<dbReference type="SMR" id="O32085"/>
<dbReference type="FunCoup" id="O32085">
    <property type="interactions" value="109"/>
</dbReference>
<dbReference type="STRING" id="224308.BSU31140"/>
<dbReference type="PaxDb" id="224308-BSU31140"/>
<dbReference type="DNASU" id="938837"/>
<dbReference type="EnsemblBacteria" id="CAB15092">
    <property type="protein sequence ID" value="CAB15092"/>
    <property type="gene ID" value="BSU_31140"/>
</dbReference>
<dbReference type="GeneID" id="938837"/>
<dbReference type="KEGG" id="bsu:BSU31140"/>
<dbReference type="PATRIC" id="fig|224308.179.peg.3374"/>
<dbReference type="eggNOG" id="COG5553">
    <property type="taxonomic scope" value="Bacteria"/>
</dbReference>
<dbReference type="InParanoid" id="O32085"/>
<dbReference type="OrthoDB" id="7059163at2"/>
<dbReference type="PhylomeDB" id="O32085"/>
<dbReference type="BioCyc" id="BSUB:BSU31140-MONOMER"/>
<dbReference type="BRENDA" id="1.13.11.20">
    <property type="organism ID" value="658"/>
</dbReference>
<dbReference type="SABIO-RK" id="O32085"/>
<dbReference type="EvolutionaryTrace" id="O32085"/>
<dbReference type="Proteomes" id="UP000001570">
    <property type="component" value="Chromosome"/>
</dbReference>
<dbReference type="GO" id="GO:0017172">
    <property type="term" value="F:cysteine dioxygenase activity"/>
    <property type="evidence" value="ECO:0007669"/>
    <property type="project" value="UniProtKB-EC"/>
</dbReference>
<dbReference type="GO" id="GO:0008198">
    <property type="term" value="F:ferrous iron binding"/>
    <property type="evidence" value="ECO:0000318"/>
    <property type="project" value="GO_Central"/>
</dbReference>
<dbReference type="GO" id="GO:0016702">
    <property type="term" value="F:oxidoreductase activity, acting on single donors with incorporation of molecular oxygen, incorporation of two atoms of oxygen"/>
    <property type="evidence" value="ECO:0000318"/>
    <property type="project" value="GO_Central"/>
</dbReference>
<dbReference type="CDD" id="cd10548">
    <property type="entry name" value="cupin_CDO"/>
    <property type="match status" value="1"/>
</dbReference>
<dbReference type="Gene3D" id="2.60.120.10">
    <property type="entry name" value="Jelly Rolls"/>
    <property type="match status" value="1"/>
</dbReference>
<dbReference type="InterPro" id="IPR010300">
    <property type="entry name" value="CDO_1"/>
</dbReference>
<dbReference type="InterPro" id="IPR014710">
    <property type="entry name" value="RmlC-like_jellyroll"/>
</dbReference>
<dbReference type="InterPro" id="IPR011051">
    <property type="entry name" value="RmlC_Cupin_sf"/>
</dbReference>
<dbReference type="PANTHER" id="PTHR12918">
    <property type="entry name" value="CYSTEINE DIOXYGENASE"/>
    <property type="match status" value="1"/>
</dbReference>
<dbReference type="PANTHER" id="PTHR12918:SF1">
    <property type="entry name" value="CYSTEINE DIOXYGENASE TYPE 1"/>
    <property type="match status" value="1"/>
</dbReference>
<dbReference type="Pfam" id="PF05995">
    <property type="entry name" value="CDO_I"/>
    <property type="match status" value="1"/>
</dbReference>
<dbReference type="SUPFAM" id="SSF51182">
    <property type="entry name" value="RmlC-like cupins"/>
    <property type="match status" value="1"/>
</dbReference>
<protein>
    <recommendedName>
        <fullName>Cysteine dioxygenase</fullName>
        <shortName>CDO</shortName>
        <ecNumber>1.13.11.20</ecNumber>
    </recommendedName>
</protein>
<reference key="1">
    <citation type="journal article" date="1997" name="Nature">
        <title>The complete genome sequence of the Gram-positive bacterium Bacillus subtilis.</title>
        <authorList>
            <person name="Kunst F."/>
            <person name="Ogasawara N."/>
            <person name="Moszer I."/>
            <person name="Albertini A.M."/>
            <person name="Alloni G."/>
            <person name="Azevedo V."/>
            <person name="Bertero M.G."/>
            <person name="Bessieres P."/>
            <person name="Bolotin A."/>
            <person name="Borchert S."/>
            <person name="Borriss R."/>
            <person name="Boursier L."/>
            <person name="Brans A."/>
            <person name="Braun M."/>
            <person name="Brignell S.C."/>
            <person name="Bron S."/>
            <person name="Brouillet S."/>
            <person name="Bruschi C.V."/>
            <person name="Caldwell B."/>
            <person name="Capuano V."/>
            <person name="Carter N.M."/>
            <person name="Choi S.-K."/>
            <person name="Codani J.-J."/>
            <person name="Connerton I.F."/>
            <person name="Cummings N.J."/>
            <person name="Daniel R.A."/>
            <person name="Denizot F."/>
            <person name="Devine K.M."/>
            <person name="Duesterhoeft A."/>
            <person name="Ehrlich S.D."/>
            <person name="Emmerson P.T."/>
            <person name="Entian K.-D."/>
            <person name="Errington J."/>
            <person name="Fabret C."/>
            <person name="Ferrari E."/>
            <person name="Foulger D."/>
            <person name="Fritz C."/>
            <person name="Fujita M."/>
            <person name="Fujita Y."/>
            <person name="Fuma S."/>
            <person name="Galizzi A."/>
            <person name="Galleron N."/>
            <person name="Ghim S.-Y."/>
            <person name="Glaser P."/>
            <person name="Goffeau A."/>
            <person name="Golightly E.J."/>
            <person name="Grandi G."/>
            <person name="Guiseppi G."/>
            <person name="Guy B.J."/>
            <person name="Haga K."/>
            <person name="Haiech J."/>
            <person name="Harwood C.R."/>
            <person name="Henaut A."/>
            <person name="Hilbert H."/>
            <person name="Holsappel S."/>
            <person name="Hosono S."/>
            <person name="Hullo M.-F."/>
            <person name="Itaya M."/>
            <person name="Jones L.-M."/>
            <person name="Joris B."/>
            <person name="Karamata D."/>
            <person name="Kasahara Y."/>
            <person name="Klaerr-Blanchard M."/>
            <person name="Klein C."/>
            <person name="Kobayashi Y."/>
            <person name="Koetter P."/>
            <person name="Koningstein G."/>
            <person name="Krogh S."/>
            <person name="Kumano M."/>
            <person name="Kurita K."/>
            <person name="Lapidus A."/>
            <person name="Lardinois S."/>
            <person name="Lauber J."/>
            <person name="Lazarevic V."/>
            <person name="Lee S.-M."/>
            <person name="Levine A."/>
            <person name="Liu H."/>
            <person name="Masuda S."/>
            <person name="Mauel C."/>
            <person name="Medigue C."/>
            <person name="Medina N."/>
            <person name="Mellado R.P."/>
            <person name="Mizuno M."/>
            <person name="Moestl D."/>
            <person name="Nakai S."/>
            <person name="Noback M."/>
            <person name="Noone D."/>
            <person name="O'Reilly M."/>
            <person name="Ogawa K."/>
            <person name="Ogiwara A."/>
            <person name="Oudega B."/>
            <person name="Park S.-H."/>
            <person name="Parro V."/>
            <person name="Pohl T.M."/>
            <person name="Portetelle D."/>
            <person name="Porwollik S."/>
            <person name="Prescott A.M."/>
            <person name="Presecan E."/>
            <person name="Pujic P."/>
            <person name="Purnelle B."/>
            <person name="Rapoport G."/>
            <person name="Rey M."/>
            <person name="Reynolds S."/>
            <person name="Rieger M."/>
            <person name="Rivolta C."/>
            <person name="Rocha E."/>
            <person name="Roche B."/>
            <person name="Rose M."/>
            <person name="Sadaie Y."/>
            <person name="Sato T."/>
            <person name="Scanlan E."/>
            <person name="Schleich S."/>
            <person name="Schroeter R."/>
            <person name="Scoffone F."/>
            <person name="Sekiguchi J."/>
            <person name="Sekowska A."/>
            <person name="Seror S.J."/>
            <person name="Serror P."/>
            <person name="Shin B.-S."/>
            <person name="Soldo B."/>
            <person name="Sorokin A."/>
            <person name="Tacconi E."/>
            <person name="Takagi T."/>
            <person name="Takahashi H."/>
            <person name="Takemaru K."/>
            <person name="Takeuchi M."/>
            <person name="Tamakoshi A."/>
            <person name="Tanaka T."/>
            <person name="Terpstra P."/>
            <person name="Tognoni A."/>
            <person name="Tosato V."/>
            <person name="Uchiyama S."/>
            <person name="Vandenbol M."/>
            <person name="Vannier F."/>
            <person name="Vassarotti A."/>
            <person name="Viari A."/>
            <person name="Wambutt R."/>
            <person name="Wedler E."/>
            <person name="Wedler H."/>
            <person name="Weitzenegger T."/>
            <person name="Winters P."/>
            <person name="Wipat A."/>
            <person name="Yamamoto H."/>
            <person name="Yamane K."/>
            <person name="Yasumoto K."/>
            <person name="Yata K."/>
            <person name="Yoshida K."/>
            <person name="Yoshikawa H.-F."/>
            <person name="Zumstein E."/>
            <person name="Yoshikawa H."/>
            <person name="Danchin A."/>
        </authorList>
    </citation>
    <scope>NUCLEOTIDE SEQUENCE [LARGE SCALE GENOMIC DNA]</scope>
    <source>
        <strain>168</strain>
    </source>
</reference>
<reference key="2">
    <citation type="journal article" date="2006" name="J. Bacteriol.">
        <title>Identification and characterization of bacterial cysteine dioxygenases: a new route of cysteine degradation for eubacteria.</title>
        <authorList>
            <person name="Dominy J.E. Jr."/>
            <person name="Simmons C.R."/>
            <person name="Karplus P.A."/>
            <person name="Gehring A.M."/>
            <person name="Stipanuk M.H."/>
        </authorList>
    </citation>
    <scope>CATALYTIC ACTIVITY</scope>
    <scope>BIOPHYSICOCHEMICAL PROPERTIES</scope>
    <scope>DEVELOPMENTAL STAGE</scope>
</reference>
<reference key="3">
    <citation type="journal article" date="2015" name="Protein Sci.">
        <title>Structures of Arg- and Gln-type bacterial cysteine dioxygenase homologs.</title>
        <authorList>
            <person name="Driggers C.M."/>
            <person name="Hartman S.J."/>
            <person name="Karplus P.A."/>
        </authorList>
    </citation>
    <scope>X-RAY CRYSTALLOGRAPHY (2.30 ANGSTROMS) IN COMPLEX WITH IRON</scope>
</reference>